<organism>
    <name type="scientific">Pongo abelii</name>
    <name type="common">Sumatran orangutan</name>
    <name type="synonym">Pongo pygmaeus abelii</name>
    <dbReference type="NCBI Taxonomy" id="9601"/>
    <lineage>
        <taxon>Eukaryota</taxon>
        <taxon>Metazoa</taxon>
        <taxon>Chordata</taxon>
        <taxon>Craniata</taxon>
        <taxon>Vertebrata</taxon>
        <taxon>Euteleostomi</taxon>
        <taxon>Mammalia</taxon>
        <taxon>Eutheria</taxon>
        <taxon>Euarchontoglires</taxon>
        <taxon>Primates</taxon>
        <taxon>Haplorrhini</taxon>
        <taxon>Catarrhini</taxon>
        <taxon>Hominidae</taxon>
        <taxon>Pongo</taxon>
    </lineage>
</organism>
<reference key="1">
    <citation type="submission" date="2004-11" db="EMBL/GenBank/DDBJ databases">
        <authorList>
            <consortium name="The German cDNA consortium"/>
        </authorList>
    </citation>
    <scope>NUCLEOTIDE SEQUENCE [LARGE SCALE MRNA]</scope>
    <source>
        <tissue>Brain cortex</tissue>
    </source>
</reference>
<proteinExistence type="evidence at transcript level"/>
<gene>
    <name type="primary">COPS4</name>
</gene>
<name>CSN4_PONAB</name>
<keyword id="KW-0007">Acetylation</keyword>
<keyword id="KW-0963">Cytoplasm</keyword>
<keyword id="KW-0968">Cytoplasmic vesicle</keyword>
<keyword id="KW-0539">Nucleus</keyword>
<keyword id="KW-1185">Reference proteome</keyword>
<keyword id="KW-0736">Signalosome</keyword>
<keyword id="KW-0770">Synapse</keyword>
<accession>Q5R648</accession>
<feature type="initiator methionine" description="Removed" evidence="1">
    <location>
        <position position="1"/>
    </location>
</feature>
<feature type="chain" id="PRO_0000290346" description="COP9 signalosome complex subunit 4">
    <location>
        <begin position="2"/>
        <end position="406"/>
    </location>
</feature>
<feature type="domain" description="PCI" evidence="2">
    <location>
        <begin position="197"/>
        <end position="366"/>
    </location>
</feature>
<feature type="modified residue" description="N-acetylalanine" evidence="1">
    <location>
        <position position="2"/>
    </location>
</feature>
<feature type="modified residue" description="N6-acetyllysine" evidence="1">
    <location>
        <position position="25"/>
    </location>
</feature>
<dbReference type="EMBL" id="CR860648">
    <property type="protein sequence ID" value="CAH92768.1"/>
    <property type="molecule type" value="mRNA"/>
</dbReference>
<dbReference type="RefSeq" id="NP_001126614.1">
    <property type="nucleotide sequence ID" value="NM_001133142.1"/>
</dbReference>
<dbReference type="SMR" id="Q5R648"/>
<dbReference type="STRING" id="9601.ENSPPYP00000016631"/>
<dbReference type="GeneID" id="100173611"/>
<dbReference type="KEGG" id="pon:100173611"/>
<dbReference type="CTD" id="51138"/>
<dbReference type="eggNOG" id="KOG1497">
    <property type="taxonomic scope" value="Eukaryota"/>
</dbReference>
<dbReference type="InParanoid" id="Q5R648"/>
<dbReference type="OrthoDB" id="295656at2759"/>
<dbReference type="Proteomes" id="UP000001595">
    <property type="component" value="Unplaced"/>
</dbReference>
<dbReference type="GO" id="GO:0008180">
    <property type="term" value="C:COP9 signalosome"/>
    <property type="evidence" value="ECO:0007669"/>
    <property type="project" value="UniProtKB-KW"/>
</dbReference>
<dbReference type="GO" id="GO:0005829">
    <property type="term" value="C:cytosol"/>
    <property type="evidence" value="ECO:0007669"/>
    <property type="project" value="TreeGrafter"/>
</dbReference>
<dbReference type="GO" id="GO:0008021">
    <property type="term" value="C:synaptic vesicle"/>
    <property type="evidence" value="ECO:0007669"/>
    <property type="project" value="UniProtKB-SubCell"/>
</dbReference>
<dbReference type="GO" id="GO:0000338">
    <property type="term" value="P:protein deneddylation"/>
    <property type="evidence" value="ECO:0000250"/>
    <property type="project" value="UniProtKB"/>
</dbReference>
<dbReference type="FunFam" id="1.10.10.10:FF:000130">
    <property type="entry name" value="COP9 signalosome complex subunit 4"/>
    <property type="match status" value="1"/>
</dbReference>
<dbReference type="Gene3D" id="1.10.10.10">
    <property type="entry name" value="Winged helix-like DNA-binding domain superfamily/Winged helix DNA-binding domain"/>
    <property type="match status" value="1"/>
</dbReference>
<dbReference type="InterPro" id="IPR041406">
    <property type="entry name" value="CSN4_HTH"/>
</dbReference>
<dbReference type="InterPro" id="IPR000717">
    <property type="entry name" value="PCI_dom"/>
</dbReference>
<dbReference type="InterPro" id="IPR054559">
    <property type="entry name" value="PSMD12-CSN4-like_N"/>
</dbReference>
<dbReference type="InterPro" id="IPR040134">
    <property type="entry name" value="PSMD12/CSN4"/>
</dbReference>
<dbReference type="InterPro" id="IPR036388">
    <property type="entry name" value="WH-like_DNA-bd_sf"/>
</dbReference>
<dbReference type="InterPro" id="IPR036390">
    <property type="entry name" value="WH_DNA-bd_sf"/>
</dbReference>
<dbReference type="PANTHER" id="PTHR10855">
    <property type="entry name" value="26S PROTEASOME NON-ATPASE REGULATORY SUBUNIT 12/COP9 SIGNALOSOME COMPLEX SUBUNIT 4"/>
    <property type="match status" value="1"/>
</dbReference>
<dbReference type="PANTHER" id="PTHR10855:SF2">
    <property type="entry name" value="COP9 SIGNALOSOME COMPLEX SUBUNIT 4"/>
    <property type="match status" value="1"/>
</dbReference>
<dbReference type="Pfam" id="PF18420">
    <property type="entry name" value="CSN4_RPN5_eIF3a"/>
    <property type="match status" value="1"/>
</dbReference>
<dbReference type="Pfam" id="PF01399">
    <property type="entry name" value="PCI"/>
    <property type="match status" value="1"/>
</dbReference>
<dbReference type="Pfam" id="PF22241">
    <property type="entry name" value="PSMD12-CSN4_N"/>
    <property type="match status" value="1"/>
</dbReference>
<dbReference type="SMART" id="SM00088">
    <property type="entry name" value="PINT"/>
    <property type="match status" value="1"/>
</dbReference>
<dbReference type="SUPFAM" id="SSF46785">
    <property type="entry name" value="Winged helix' DNA-binding domain"/>
    <property type="match status" value="1"/>
</dbReference>
<dbReference type="PROSITE" id="PS50250">
    <property type="entry name" value="PCI"/>
    <property type="match status" value="1"/>
</dbReference>
<comment type="function">
    <text evidence="1">Component of the COP9 signalosome complex (CSN), a complex involved in various cellular and developmental processes (By similarity). The CSN complex is an essential regulator of the ubiquitin (Ubl) conjugation pathway by mediating the deneddylation of the cullin subunits of SCF-type E3 ligase complexes, leading to decrease the Ubl ligase activity of SCF-type complexes such as SCF, CSA or DDB2 (By similarity). Also involved in the deneddylation of non-cullin subunits such as STON2 (By similarity). The complex is also involved in phosphorylation of p53/TP53, c-jun/JUN, IkappaBalpha/NFKBIA, ITPK1, IRF8/ICSBP and SNAPIN, possibly via its association with CK2 and PKD kinases (By similarity). CSN-dependent phosphorylation of TP53 and JUN promotes and protects degradation by the Ubl system, respectively (By similarity).</text>
</comment>
<comment type="subunit">
    <text evidence="1">Component of the CSN complex, composed of COPS1/GPS1, COPS2, COPS3, COPS4, COPS5, COPS6, COPS7 (COPS7A or COPS7B), COPS8 and COPS9 (By similarity). In the complex, it probably interacts directly with COPS1, COPS2, COPS3, COPS5, COPS6, COPS7 (COPS7A or COPS7B) and COPS8 (By similarity). Interacts with TOR1A; the interaction is direct and associates TOR1A and SNAPIN with the CSN complex (By similarity). Interacts with STON2; controls STON2 neddylation levels (By similarity). Interacts with ERCC6 (By similarity).</text>
</comment>
<comment type="subcellular location">
    <subcellularLocation>
        <location evidence="1">Cytoplasm</location>
    </subcellularLocation>
    <subcellularLocation>
        <location evidence="1">Nucleus</location>
    </subcellularLocation>
    <subcellularLocation>
        <location evidence="1">Cytoplasmic vesicle</location>
        <location evidence="1">Secretory vesicle</location>
        <location evidence="1">Synaptic vesicle</location>
    </subcellularLocation>
</comment>
<comment type="similarity">
    <text evidence="3">Belongs to the CSN4 family.</text>
</comment>
<sequence length="406" mass="46255">MAAAVRQDLAQLMNSSGSHKDLAGKYRQILEKAIQLSGAEQLEALKAFVEAMVNENVSLVISRQLLTDFCTHLPNLPDSTAKEIYHFTLEKIQPRVISFEEQVASVRQHLASIYEKEEDWRNAAQVLVGIPLETGQKQYNVDYKLETYLKIARLYLEDDDPVQAEAYINRASLLQNESTNEQLQIHYKVCYARVLDYRRKFIEAAQRYNELSYKTIVHESERLEALKHALHCTILASAGQQRSRMLATLFKDERCQQLAAYGILEKMYLDRIIRGNQLQEFAAMLMPHQKATTADGSSILDRAVIEHNLLSASKLYNNITFEELGALLEIPAAKAEKIASQMITEGRMNGFIDQIDGIVHFETREALPTWDKQIQSLCFQVNNLLEKISQTAPEWTAQAMEAQMAQ</sequence>
<protein>
    <recommendedName>
        <fullName>COP9 signalosome complex subunit 4</fullName>
        <shortName>SGN4</shortName>
        <shortName>Signalosome subunit 4</shortName>
    </recommendedName>
</protein>
<evidence type="ECO:0000250" key="1">
    <source>
        <dbReference type="UniProtKB" id="Q9BT78"/>
    </source>
</evidence>
<evidence type="ECO:0000255" key="2">
    <source>
        <dbReference type="PROSITE-ProRule" id="PRU01185"/>
    </source>
</evidence>
<evidence type="ECO:0000305" key="3"/>